<feature type="chain" id="PRO_0000086683" description="Serine/threonine-protein kinase ssp1">
    <location>
        <begin position="1"/>
        <end position="652"/>
    </location>
</feature>
<feature type="domain" description="Protein kinase" evidence="1">
    <location>
        <begin position="135"/>
        <end position="409"/>
    </location>
</feature>
<feature type="region of interest" description="Disordered" evidence="3">
    <location>
        <begin position="467"/>
        <end position="491"/>
    </location>
</feature>
<feature type="region of interest" description="Disordered" evidence="3">
    <location>
        <begin position="506"/>
        <end position="529"/>
    </location>
</feature>
<feature type="compositionally biased region" description="Basic and acidic residues" evidence="3">
    <location>
        <begin position="508"/>
        <end position="518"/>
    </location>
</feature>
<feature type="active site" description="Proton acceptor" evidence="1 2">
    <location>
        <position position="267"/>
    </location>
</feature>
<feature type="binding site" evidence="1">
    <location>
        <begin position="141"/>
        <end position="149"/>
    </location>
    <ligand>
        <name>ATP</name>
        <dbReference type="ChEBI" id="CHEBI:30616"/>
    </ligand>
</feature>
<feature type="binding site" evidence="1">
    <location>
        <position position="164"/>
    </location>
    <ligand>
        <name>ATP</name>
        <dbReference type="ChEBI" id="CHEBI:30616"/>
    </ligand>
</feature>
<feature type="modified residue" description="Phosphotyrosine" evidence="5">
    <location>
        <position position="58"/>
    </location>
</feature>
<feature type="modified residue" description="Phosphoserine" evidence="5">
    <location>
        <position position="59"/>
    </location>
</feature>
<feature type="modified residue" description="Phosphotyrosine" evidence="5">
    <location>
        <position position="63"/>
    </location>
</feature>
<protein>
    <recommendedName>
        <fullName>Serine/threonine-protein kinase ssp1</fullName>
        <ecNumber>2.7.11.1</ecNumber>
    </recommendedName>
</protein>
<keyword id="KW-0067">ATP-binding</keyword>
<keyword id="KW-0963">Cytoplasm</keyword>
<keyword id="KW-0418">Kinase</keyword>
<keyword id="KW-0547">Nucleotide-binding</keyword>
<keyword id="KW-0597">Phosphoprotein</keyword>
<keyword id="KW-1185">Reference proteome</keyword>
<keyword id="KW-0723">Serine/threonine-protein kinase</keyword>
<keyword id="KW-0808">Transferase</keyword>
<organism>
    <name type="scientific">Schizosaccharomyces pombe (strain 972 / ATCC 24843)</name>
    <name type="common">Fission yeast</name>
    <dbReference type="NCBI Taxonomy" id="284812"/>
    <lineage>
        <taxon>Eukaryota</taxon>
        <taxon>Fungi</taxon>
        <taxon>Dikarya</taxon>
        <taxon>Ascomycota</taxon>
        <taxon>Taphrinomycotina</taxon>
        <taxon>Schizosaccharomycetes</taxon>
        <taxon>Schizosaccharomycetales</taxon>
        <taxon>Schizosaccharomycetaceae</taxon>
        <taxon>Schizosaccharomyces</taxon>
    </lineage>
</organism>
<reference key="1">
    <citation type="journal article" date="1995" name="EMBO J.">
        <title>A novel protein kinase gene ssp1+ is required for alteration of growth polarity and actin localization in fission yeast.</title>
        <authorList>
            <person name="Matsusaka T."/>
            <person name="Hirata D."/>
            <person name="Yanagida M."/>
            <person name="Toda T."/>
        </authorList>
    </citation>
    <scope>NUCLEOTIDE SEQUENCE [GENOMIC DNA]</scope>
    <source>
        <strain>972 / ATCC 24843</strain>
    </source>
</reference>
<reference key="2">
    <citation type="journal article" date="2002" name="Nature">
        <title>The genome sequence of Schizosaccharomyces pombe.</title>
        <authorList>
            <person name="Wood V."/>
            <person name="Gwilliam R."/>
            <person name="Rajandream M.A."/>
            <person name="Lyne M.H."/>
            <person name="Lyne R."/>
            <person name="Stewart A."/>
            <person name="Sgouros J.G."/>
            <person name="Peat N."/>
            <person name="Hayles J."/>
            <person name="Baker S.G."/>
            <person name="Basham D."/>
            <person name="Bowman S."/>
            <person name="Brooks K."/>
            <person name="Brown D."/>
            <person name="Brown S."/>
            <person name="Chillingworth T."/>
            <person name="Churcher C.M."/>
            <person name="Collins M."/>
            <person name="Connor R."/>
            <person name="Cronin A."/>
            <person name="Davis P."/>
            <person name="Feltwell T."/>
            <person name="Fraser A."/>
            <person name="Gentles S."/>
            <person name="Goble A."/>
            <person name="Hamlin N."/>
            <person name="Harris D.E."/>
            <person name="Hidalgo J."/>
            <person name="Hodgson G."/>
            <person name="Holroyd S."/>
            <person name="Hornsby T."/>
            <person name="Howarth S."/>
            <person name="Huckle E.J."/>
            <person name="Hunt S."/>
            <person name="Jagels K."/>
            <person name="James K.D."/>
            <person name="Jones L."/>
            <person name="Jones M."/>
            <person name="Leather S."/>
            <person name="McDonald S."/>
            <person name="McLean J."/>
            <person name="Mooney P."/>
            <person name="Moule S."/>
            <person name="Mungall K.L."/>
            <person name="Murphy L.D."/>
            <person name="Niblett D."/>
            <person name="Odell C."/>
            <person name="Oliver K."/>
            <person name="O'Neil S."/>
            <person name="Pearson D."/>
            <person name="Quail M.A."/>
            <person name="Rabbinowitsch E."/>
            <person name="Rutherford K.M."/>
            <person name="Rutter S."/>
            <person name="Saunders D."/>
            <person name="Seeger K."/>
            <person name="Sharp S."/>
            <person name="Skelton J."/>
            <person name="Simmonds M.N."/>
            <person name="Squares R."/>
            <person name="Squares S."/>
            <person name="Stevens K."/>
            <person name="Taylor K."/>
            <person name="Taylor R.G."/>
            <person name="Tivey A."/>
            <person name="Walsh S.V."/>
            <person name="Warren T."/>
            <person name="Whitehead S."/>
            <person name="Woodward J.R."/>
            <person name="Volckaert G."/>
            <person name="Aert R."/>
            <person name="Robben J."/>
            <person name="Grymonprez B."/>
            <person name="Weltjens I."/>
            <person name="Vanstreels E."/>
            <person name="Rieger M."/>
            <person name="Schaefer M."/>
            <person name="Mueller-Auer S."/>
            <person name="Gabel C."/>
            <person name="Fuchs M."/>
            <person name="Duesterhoeft A."/>
            <person name="Fritzc C."/>
            <person name="Holzer E."/>
            <person name="Moestl D."/>
            <person name="Hilbert H."/>
            <person name="Borzym K."/>
            <person name="Langer I."/>
            <person name="Beck A."/>
            <person name="Lehrach H."/>
            <person name="Reinhardt R."/>
            <person name="Pohl T.M."/>
            <person name="Eger P."/>
            <person name="Zimmermann W."/>
            <person name="Wedler H."/>
            <person name="Wambutt R."/>
            <person name="Purnelle B."/>
            <person name="Goffeau A."/>
            <person name="Cadieu E."/>
            <person name="Dreano S."/>
            <person name="Gloux S."/>
            <person name="Lelaure V."/>
            <person name="Mottier S."/>
            <person name="Galibert F."/>
            <person name="Aves S.J."/>
            <person name="Xiang Z."/>
            <person name="Hunt C."/>
            <person name="Moore K."/>
            <person name="Hurst S.M."/>
            <person name="Lucas M."/>
            <person name="Rochet M."/>
            <person name="Gaillardin C."/>
            <person name="Tallada V.A."/>
            <person name="Garzon A."/>
            <person name="Thode G."/>
            <person name="Daga R.R."/>
            <person name="Cruzado L."/>
            <person name="Jimenez J."/>
            <person name="Sanchez M."/>
            <person name="del Rey F."/>
            <person name="Benito J."/>
            <person name="Dominguez A."/>
            <person name="Revuelta J.L."/>
            <person name="Moreno S."/>
            <person name="Armstrong J."/>
            <person name="Forsburg S.L."/>
            <person name="Cerutti L."/>
            <person name="Lowe T."/>
            <person name="McCombie W.R."/>
            <person name="Paulsen I."/>
            <person name="Potashkin J."/>
            <person name="Shpakovski G.V."/>
            <person name="Ussery D."/>
            <person name="Barrell B.G."/>
            <person name="Nurse P."/>
        </authorList>
    </citation>
    <scope>NUCLEOTIDE SEQUENCE [LARGE SCALE GENOMIC DNA]</scope>
    <source>
        <strain>972 / ATCC 24843</strain>
    </source>
</reference>
<reference key="3">
    <citation type="journal article" date="2000" name="Genes Cells">
        <title>Large-scale screening of intracellular protein localization in living fission yeast cells by the use of a GFP-fusion genomic DNA library.</title>
        <authorList>
            <person name="Ding D.-Q."/>
            <person name="Tomita Y."/>
            <person name="Yamamoto A."/>
            <person name="Chikashige Y."/>
            <person name="Haraguchi T."/>
            <person name="Hiraoka Y."/>
        </authorList>
    </citation>
    <scope>NUCLEOTIDE SEQUENCE [LARGE SCALE GENOMIC DNA] OF 177-393</scope>
    <source>
        <strain>ATCC 38364 / 968</strain>
    </source>
</reference>
<reference key="4">
    <citation type="journal article" date="2006" name="Nat. Biotechnol.">
        <title>ORFeome cloning and global analysis of protein localization in the fission yeast Schizosaccharomyces pombe.</title>
        <authorList>
            <person name="Matsuyama A."/>
            <person name="Arai R."/>
            <person name="Yashiroda Y."/>
            <person name="Shirai A."/>
            <person name="Kamata A."/>
            <person name="Sekido S."/>
            <person name="Kobayashi Y."/>
            <person name="Hashimoto A."/>
            <person name="Hamamoto M."/>
            <person name="Hiraoka Y."/>
            <person name="Horinouchi S."/>
            <person name="Yoshida M."/>
        </authorList>
    </citation>
    <scope>SUBCELLULAR LOCATION [LARGE SCALE ANALYSIS]</scope>
</reference>
<reference key="5">
    <citation type="journal article" date="2008" name="J. Proteome Res.">
        <title>Phosphoproteome analysis of fission yeast.</title>
        <authorList>
            <person name="Wilson-Grady J.T."/>
            <person name="Villen J."/>
            <person name="Gygi S.P."/>
        </authorList>
    </citation>
    <scope>PHOSPHORYLATION [LARGE SCALE ANALYSIS] AT TYR-58; SER-59 AND TYR-63</scope>
    <scope>IDENTIFICATION BY MASS SPECTROMETRY</scope>
</reference>
<evidence type="ECO:0000255" key="1">
    <source>
        <dbReference type="PROSITE-ProRule" id="PRU00159"/>
    </source>
</evidence>
<evidence type="ECO:0000255" key="2">
    <source>
        <dbReference type="PROSITE-ProRule" id="PRU10027"/>
    </source>
</evidence>
<evidence type="ECO:0000256" key="3">
    <source>
        <dbReference type="SAM" id="MobiDB-lite"/>
    </source>
</evidence>
<evidence type="ECO:0000269" key="4">
    <source>
    </source>
</evidence>
<evidence type="ECO:0000269" key="5">
    <source>
    </source>
</evidence>
<comment type="function">
    <text>Involved in actin localization and thus in polarized cell growth.</text>
</comment>
<comment type="catalytic activity">
    <reaction>
        <text>L-seryl-[protein] + ATP = O-phospho-L-seryl-[protein] + ADP + H(+)</text>
        <dbReference type="Rhea" id="RHEA:17989"/>
        <dbReference type="Rhea" id="RHEA-COMP:9863"/>
        <dbReference type="Rhea" id="RHEA-COMP:11604"/>
        <dbReference type="ChEBI" id="CHEBI:15378"/>
        <dbReference type="ChEBI" id="CHEBI:29999"/>
        <dbReference type="ChEBI" id="CHEBI:30616"/>
        <dbReference type="ChEBI" id="CHEBI:83421"/>
        <dbReference type="ChEBI" id="CHEBI:456216"/>
        <dbReference type="EC" id="2.7.11.1"/>
    </reaction>
</comment>
<comment type="catalytic activity">
    <reaction>
        <text>L-threonyl-[protein] + ATP = O-phospho-L-threonyl-[protein] + ADP + H(+)</text>
        <dbReference type="Rhea" id="RHEA:46608"/>
        <dbReference type="Rhea" id="RHEA-COMP:11060"/>
        <dbReference type="Rhea" id="RHEA-COMP:11605"/>
        <dbReference type="ChEBI" id="CHEBI:15378"/>
        <dbReference type="ChEBI" id="CHEBI:30013"/>
        <dbReference type="ChEBI" id="CHEBI:30616"/>
        <dbReference type="ChEBI" id="CHEBI:61977"/>
        <dbReference type="ChEBI" id="CHEBI:456216"/>
        <dbReference type="EC" id="2.7.11.1"/>
    </reaction>
</comment>
<comment type="subcellular location">
    <subcellularLocation>
        <location evidence="4">Cytoplasm</location>
    </subcellularLocation>
</comment>
<comment type="similarity">
    <text evidence="1">Belongs to the protein kinase superfamily. Ser/Thr protein kinase family.</text>
</comment>
<gene>
    <name type="primary">ssp1</name>
    <name type="ORF">SPCC297.03</name>
</gene>
<proteinExistence type="evidence at protein level"/>
<dbReference type="EC" id="2.7.11.1"/>
<dbReference type="EMBL" id="D45882">
    <property type="protein sequence ID" value="BAA08301.1"/>
    <property type="molecule type" value="Genomic_DNA"/>
</dbReference>
<dbReference type="EMBL" id="CU329672">
    <property type="protein sequence ID" value="CAB40783.1"/>
    <property type="molecule type" value="Genomic_DNA"/>
</dbReference>
<dbReference type="EMBL" id="AB027913">
    <property type="protein sequence ID" value="BAA87217.1"/>
    <property type="molecule type" value="Genomic_DNA"/>
</dbReference>
<dbReference type="PIR" id="S58666">
    <property type="entry name" value="S58666"/>
</dbReference>
<dbReference type="RefSeq" id="NP_588360.1">
    <property type="nucleotide sequence ID" value="NM_001023351.2"/>
</dbReference>
<dbReference type="SMR" id="P50526"/>
<dbReference type="BioGRID" id="275525">
    <property type="interactions" value="26"/>
</dbReference>
<dbReference type="FunCoup" id="P50526">
    <property type="interactions" value="591"/>
</dbReference>
<dbReference type="STRING" id="284812.P50526"/>
<dbReference type="iPTMnet" id="P50526"/>
<dbReference type="PaxDb" id="4896-SPCC297.03.1"/>
<dbReference type="EnsemblFungi" id="SPCC297.03.1">
    <property type="protein sequence ID" value="SPCC297.03.1:pep"/>
    <property type="gene ID" value="SPCC297.03"/>
</dbReference>
<dbReference type="GeneID" id="2538951"/>
<dbReference type="KEGG" id="spo:2538951"/>
<dbReference type="PomBase" id="SPCC297.03">
    <property type="gene designation" value="ssp1"/>
</dbReference>
<dbReference type="VEuPathDB" id="FungiDB:SPCC297.03"/>
<dbReference type="eggNOG" id="KOG0585">
    <property type="taxonomic scope" value="Eukaryota"/>
</dbReference>
<dbReference type="HOGENOM" id="CLU_021055_0_0_1"/>
<dbReference type="InParanoid" id="P50526"/>
<dbReference type="OMA" id="CWTDLDR"/>
<dbReference type="PhylomeDB" id="P50526"/>
<dbReference type="BRENDA" id="2.7.11.1">
    <property type="organism ID" value="5613"/>
</dbReference>
<dbReference type="PRO" id="PR:P50526"/>
<dbReference type="Proteomes" id="UP000002485">
    <property type="component" value="Chromosome III"/>
</dbReference>
<dbReference type="GO" id="GO:0051285">
    <property type="term" value="C:cell cortex of cell tip"/>
    <property type="evidence" value="ECO:0000314"/>
    <property type="project" value="PomBase"/>
</dbReference>
<dbReference type="GO" id="GO:1902716">
    <property type="term" value="C:cell cortex of growing cell tip"/>
    <property type="evidence" value="ECO:0000314"/>
    <property type="project" value="PomBase"/>
</dbReference>
<dbReference type="GO" id="GO:0032153">
    <property type="term" value="C:cell division site"/>
    <property type="evidence" value="ECO:0000314"/>
    <property type="project" value="PomBase"/>
</dbReference>
<dbReference type="GO" id="GO:0005737">
    <property type="term" value="C:cytoplasm"/>
    <property type="evidence" value="ECO:0000314"/>
    <property type="project" value="PomBase"/>
</dbReference>
<dbReference type="GO" id="GO:0005829">
    <property type="term" value="C:cytosol"/>
    <property type="evidence" value="ECO:0007005"/>
    <property type="project" value="PomBase"/>
</dbReference>
<dbReference type="GO" id="GO:0005524">
    <property type="term" value="F:ATP binding"/>
    <property type="evidence" value="ECO:0000255"/>
    <property type="project" value="PomBase"/>
</dbReference>
<dbReference type="GO" id="GO:0004683">
    <property type="term" value="F:calcium/calmodulin-dependent protein kinase activity"/>
    <property type="evidence" value="ECO:0000250"/>
    <property type="project" value="PomBase"/>
</dbReference>
<dbReference type="GO" id="GO:0005516">
    <property type="term" value="F:calmodulin binding"/>
    <property type="evidence" value="ECO:0000250"/>
    <property type="project" value="PomBase"/>
</dbReference>
<dbReference type="GO" id="GO:0106310">
    <property type="term" value="F:protein serine kinase activity"/>
    <property type="evidence" value="ECO:0007669"/>
    <property type="project" value="RHEA"/>
</dbReference>
<dbReference type="GO" id="GO:0004674">
    <property type="term" value="F:protein serine/threonine kinase activity"/>
    <property type="evidence" value="ECO:0000314"/>
    <property type="project" value="PomBase"/>
</dbReference>
<dbReference type="GO" id="GO:0061762">
    <property type="term" value="P:CAMKK-AMPK signaling cascade"/>
    <property type="evidence" value="ECO:0000305"/>
    <property type="project" value="PomBase"/>
</dbReference>
<dbReference type="GO" id="GO:0051523">
    <property type="term" value="P:cell growth mode switching, monopolar to bipolar"/>
    <property type="evidence" value="ECO:0000315"/>
    <property type="project" value="PomBase"/>
</dbReference>
<dbReference type="GO" id="GO:0042149">
    <property type="term" value="P:cellular response to glucose starvation"/>
    <property type="evidence" value="ECO:0000315"/>
    <property type="project" value="PomBase"/>
</dbReference>
<dbReference type="GO" id="GO:0010514">
    <property type="term" value="P:induction of conjugation with cellular fusion"/>
    <property type="evidence" value="ECO:0000269"/>
    <property type="project" value="PomBase"/>
</dbReference>
<dbReference type="GO" id="GO:1904262">
    <property type="term" value="P:negative regulation of TORC1 signaling"/>
    <property type="evidence" value="ECO:0000315"/>
    <property type="project" value="PomBase"/>
</dbReference>
<dbReference type="GO" id="GO:0140648">
    <property type="term" value="P:positive regulation of cell cycle switching, mitotic to meiotic cell cycle"/>
    <property type="evidence" value="ECO:0000269"/>
    <property type="project" value="PomBase"/>
</dbReference>
<dbReference type="GO" id="GO:0010971">
    <property type="term" value="P:positive regulation of G2/M transition of mitotic cell cycle"/>
    <property type="evidence" value="ECO:0000315"/>
    <property type="project" value="PomBase"/>
</dbReference>
<dbReference type="GO" id="GO:0032956">
    <property type="term" value="P:regulation of actin cytoskeleton organization"/>
    <property type="evidence" value="ECO:0000315"/>
    <property type="project" value="PomBase"/>
</dbReference>
<dbReference type="GO" id="GO:0051726">
    <property type="term" value="P:regulation of cell cycle"/>
    <property type="evidence" value="ECO:0000318"/>
    <property type="project" value="GO_Central"/>
</dbReference>
<dbReference type="CDD" id="cd14008">
    <property type="entry name" value="STKc_LKB1_CaMKK"/>
    <property type="match status" value="1"/>
</dbReference>
<dbReference type="FunFam" id="1.10.510.10:FF:000571">
    <property type="entry name" value="Maternal embryonic leucine zipper kinase"/>
    <property type="match status" value="1"/>
</dbReference>
<dbReference type="FunFam" id="3.30.200.20:FF:000206">
    <property type="entry name" value="Serine/threonine-protein kinase Ssp1"/>
    <property type="match status" value="1"/>
</dbReference>
<dbReference type="Gene3D" id="1.10.510.10">
    <property type="entry name" value="Transferase(Phosphotransferase) domain 1"/>
    <property type="match status" value="1"/>
</dbReference>
<dbReference type="InterPro" id="IPR011009">
    <property type="entry name" value="Kinase-like_dom_sf"/>
</dbReference>
<dbReference type="InterPro" id="IPR000719">
    <property type="entry name" value="Prot_kinase_dom"/>
</dbReference>
<dbReference type="InterPro" id="IPR017441">
    <property type="entry name" value="Protein_kinase_ATP_BS"/>
</dbReference>
<dbReference type="InterPro" id="IPR008271">
    <property type="entry name" value="Ser/Thr_kinase_AS"/>
</dbReference>
<dbReference type="PANTHER" id="PTHR24346">
    <property type="entry name" value="MAP/MICROTUBULE AFFINITY-REGULATING KINASE"/>
    <property type="match status" value="1"/>
</dbReference>
<dbReference type="PANTHER" id="PTHR24346:SF77">
    <property type="entry name" value="SERINE THREONINE PROTEIN KINASE"/>
    <property type="match status" value="1"/>
</dbReference>
<dbReference type="Pfam" id="PF00069">
    <property type="entry name" value="Pkinase"/>
    <property type="match status" value="1"/>
</dbReference>
<dbReference type="SMART" id="SM00220">
    <property type="entry name" value="S_TKc"/>
    <property type="match status" value="1"/>
</dbReference>
<dbReference type="SUPFAM" id="SSF56112">
    <property type="entry name" value="Protein kinase-like (PK-like)"/>
    <property type="match status" value="1"/>
</dbReference>
<dbReference type="PROSITE" id="PS00107">
    <property type="entry name" value="PROTEIN_KINASE_ATP"/>
    <property type="match status" value="1"/>
</dbReference>
<dbReference type="PROSITE" id="PS50011">
    <property type="entry name" value="PROTEIN_KINASE_DOM"/>
    <property type="match status" value="1"/>
</dbReference>
<dbReference type="PROSITE" id="PS00108">
    <property type="entry name" value="PROTEIN_KINASE_ST"/>
    <property type="match status" value="1"/>
</dbReference>
<accession>P50526</accession>
<accession>Q9UTZ4</accession>
<name>SSP1_SCHPO</name>
<sequence length="652" mass="73992">MGSVNNEEKTLIEPQRLLRKNTWHPEVDDSEVPPSVFPEYPVHKAIQKTSDSFRKRNYSAGDYVIAPLGGEREGSSLTHSWTFQPGKHNQRLYSDNFQEAQRQWKRLQEWGEVKETKKIRKRFDRFSGRKYINHYEIIKELGRGMHGKVKLGRDTVTRELLAIKIIPKTERRPKLGRANASSQKEKVRREIAILKKCVHPNVVRLREVIDDPSSTKVYLVLEYMSGGEVPWTDCDSPVLSISEARQYFRDVVLGLEYLHYQGIIHRDIKPANLLLNSSNCVKISDFGVSYIANAGLNEDNDVELAKTVGTPAFFAPELCWTDLDRPRPKISEAIDVWALGVTLFCLLFGRCPFNASMEYELFDKIVNERLNIPSTPDIGEEGRDLLKRLLCKDPEQRITLVEVKLHPWTLDGLKDPEKWLQNTDPSTVSRVEVSTDEVASAISLVGRLRRKLGKLFRFRRPKARVFDSSSSVPSDSSICRPESSGNSSIGLSASELSDSFNRLAVNESQKDRERKQVHPVEMGRNSSEKKPRCDFGWDYEAFPNDNQDADDACSYNTGDSIPQVSKSINGHFETYSRTSMDTDDVASFESPNAKHEESGMPVVTFRNYENYDANPSNFHPVVPGFVSSPNLHLAGGSDTPIYCIEHSFTPTN</sequence>